<keyword id="KW-0238">DNA-binding</keyword>
<evidence type="ECO:0000255" key="1">
    <source>
        <dbReference type="HAMAP-Rule" id="MF_00095"/>
    </source>
</evidence>
<sequence>MEFSPPLQRATLIQRYKRFLADVITPDGRELTLHCPNTGAMTGCATPGDTVWYSTSDNTKRKYPHTWELTQSQSGAFICVNTLWANRLTKEAILNESISELSGYSSLKSEVKYGSERSRIDFMLQADSRPDCYIEVKSVTLAENEQGYFPDAVTERGQKHLRELMNVAAEGQRAVIFFAVLHSAITRFSPARHIDEKYAQLLSEAQQRGVEILAYKAEISAEGMALKKSLPVTL</sequence>
<accession>Q0T860</accession>
<dbReference type="EMBL" id="CP000266">
    <property type="protein sequence ID" value="ABF02416.1"/>
    <property type="molecule type" value="Genomic_DNA"/>
</dbReference>
<dbReference type="RefSeq" id="WP_000396043.1">
    <property type="nucleotide sequence ID" value="NC_008258.1"/>
</dbReference>
<dbReference type="SMR" id="Q0T860"/>
<dbReference type="KEGG" id="sfv:SFV_0131"/>
<dbReference type="HOGENOM" id="CLU_052299_2_0_6"/>
<dbReference type="Proteomes" id="UP000000659">
    <property type="component" value="Chromosome"/>
</dbReference>
<dbReference type="GO" id="GO:0003677">
    <property type="term" value="F:DNA binding"/>
    <property type="evidence" value="ECO:0007669"/>
    <property type="project" value="UniProtKB-KW"/>
</dbReference>
<dbReference type="CDD" id="cd22359">
    <property type="entry name" value="SfsA-like_bacterial"/>
    <property type="match status" value="1"/>
</dbReference>
<dbReference type="FunFam" id="2.40.50.580:FF:000001">
    <property type="entry name" value="Sugar fermentation stimulation protein A"/>
    <property type="match status" value="1"/>
</dbReference>
<dbReference type="FunFam" id="3.40.1350.60:FF:000001">
    <property type="entry name" value="Sugar fermentation stimulation protein A"/>
    <property type="match status" value="1"/>
</dbReference>
<dbReference type="Gene3D" id="2.40.50.580">
    <property type="match status" value="1"/>
</dbReference>
<dbReference type="Gene3D" id="3.40.1350.60">
    <property type="match status" value="1"/>
</dbReference>
<dbReference type="HAMAP" id="MF_00095">
    <property type="entry name" value="SfsA"/>
    <property type="match status" value="1"/>
</dbReference>
<dbReference type="InterPro" id="IPR005224">
    <property type="entry name" value="SfsA"/>
</dbReference>
<dbReference type="InterPro" id="IPR040452">
    <property type="entry name" value="SfsA_C"/>
</dbReference>
<dbReference type="InterPro" id="IPR041465">
    <property type="entry name" value="SfsA_N"/>
</dbReference>
<dbReference type="NCBIfam" id="TIGR00230">
    <property type="entry name" value="sfsA"/>
    <property type="match status" value="1"/>
</dbReference>
<dbReference type="PANTHER" id="PTHR30545">
    <property type="entry name" value="SUGAR FERMENTATION STIMULATION PROTEIN A"/>
    <property type="match status" value="1"/>
</dbReference>
<dbReference type="PANTHER" id="PTHR30545:SF2">
    <property type="entry name" value="SUGAR FERMENTATION STIMULATION PROTEIN A"/>
    <property type="match status" value="1"/>
</dbReference>
<dbReference type="Pfam" id="PF03749">
    <property type="entry name" value="SfsA"/>
    <property type="match status" value="1"/>
</dbReference>
<dbReference type="Pfam" id="PF17746">
    <property type="entry name" value="SfsA_N"/>
    <property type="match status" value="1"/>
</dbReference>
<proteinExistence type="inferred from homology"/>
<protein>
    <recommendedName>
        <fullName evidence="1">Sugar fermentation stimulation protein A</fullName>
    </recommendedName>
</protein>
<feature type="chain" id="PRO_1000008034" description="Sugar fermentation stimulation protein A">
    <location>
        <begin position="1"/>
        <end position="234"/>
    </location>
</feature>
<feature type="DNA-binding region" description="H-T-H motif" evidence="1">
    <location>
        <begin position="201"/>
        <end position="220"/>
    </location>
</feature>
<name>SFSA_SHIF8</name>
<comment type="function">
    <text evidence="1">Binds to DNA non-specifically. Could be a regulatory factor involved in maltose metabolism.</text>
</comment>
<comment type="similarity">
    <text evidence="1">Belongs to the SfsA family.</text>
</comment>
<gene>
    <name evidence="1" type="primary">sfsA</name>
    <name type="ordered locus">SFV_0131</name>
</gene>
<organism>
    <name type="scientific">Shigella flexneri serotype 5b (strain 8401)</name>
    <dbReference type="NCBI Taxonomy" id="373384"/>
    <lineage>
        <taxon>Bacteria</taxon>
        <taxon>Pseudomonadati</taxon>
        <taxon>Pseudomonadota</taxon>
        <taxon>Gammaproteobacteria</taxon>
        <taxon>Enterobacterales</taxon>
        <taxon>Enterobacteriaceae</taxon>
        <taxon>Shigella</taxon>
    </lineage>
</organism>
<reference key="1">
    <citation type="journal article" date="2006" name="BMC Genomics">
        <title>Complete genome sequence of Shigella flexneri 5b and comparison with Shigella flexneri 2a.</title>
        <authorList>
            <person name="Nie H."/>
            <person name="Yang F."/>
            <person name="Zhang X."/>
            <person name="Yang J."/>
            <person name="Chen L."/>
            <person name="Wang J."/>
            <person name="Xiong Z."/>
            <person name="Peng J."/>
            <person name="Sun L."/>
            <person name="Dong J."/>
            <person name="Xue Y."/>
            <person name="Xu X."/>
            <person name="Chen S."/>
            <person name="Yao Z."/>
            <person name="Shen Y."/>
            <person name="Jin Q."/>
        </authorList>
    </citation>
    <scope>NUCLEOTIDE SEQUENCE [LARGE SCALE GENOMIC DNA]</scope>
    <source>
        <strain>8401</strain>
    </source>
</reference>